<dbReference type="EMBL" id="AK004597">
    <property type="protein sequence ID" value="BAB23398.1"/>
    <property type="molecule type" value="mRNA"/>
</dbReference>
<dbReference type="EMBL" id="AK005797">
    <property type="protein sequence ID" value="BAB24243.1"/>
    <property type="molecule type" value="mRNA"/>
</dbReference>
<dbReference type="EMBL" id="BC016198">
    <property type="protein sequence ID" value="AAH16198.1"/>
    <property type="molecule type" value="mRNA"/>
</dbReference>
<dbReference type="CCDS" id="CCDS22297.1"/>
<dbReference type="RefSeq" id="NP_987103.1">
    <property type="nucleotide sequence ID" value="NM_203507.3"/>
</dbReference>
<dbReference type="SMR" id="Q9CPR1"/>
<dbReference type="BioGRID" id="228661">
    <property type="interactions" value="1"/>
</dbReference>
<dbReference type="FunCoup" id="Q9CPR1">
    <property type="interactions" value="118"/>
</dbReference>
<dbReference type="IntAct" id="Q9CPR1">
    <property type="interactions" value="1"/>
</dbReference>
<dbReference type="MINT" id="Q9CPR1"/>
<dbReference type="STRING" id="10090.ENSMUSP00000033973"/>
<dbReference type="iPTMnet" id="Q9CPR1"/>
<dbReference type="PhosphoSitePlus" id="Q9CPR1"/>
<dbReference type="PaxDb" id="10090-ENSMUSP00000033973"/>
<dbReference type="PeptideAtlas" id="Q9CPR1"/>
<dbReference type="ProteomicsDB" id="256551"/>
<dbReference type="Pumba" id="Q9CPR1"/>
<dbReference type="Antibodypedia" id="45760">
    <property type="antibodies" value="44 antibodies from 10 providers"/>
</dbReference>
<dbReference type="Ensembl" id="ENSMUST00000033973.14">
    <property type="protein sequence ID" value="ENSMUSP00000033973.8"/>
    <property type="gene ID" value="ENSMUSG00000031568.17"/>
</dbReference>
<dbReference type="GeneID" id="192174"/>
<dbReference type="KEGG" id="mmu:192174"/>
<dbReference type="UCSC" id="uc033jfm.1">
    <property type="organism name" value="mouse"/>
</dbReference>
<dbReference type="AGR" id="MGI:2681000"/>
<dbReference type="CTD" id="192174"/>
<dbReference type="MGI" id="MGI:2681000">
    <property type="gene designation" value="Rwdd4a"/>
</dbReference>
<dbReference type="VEuPathDB" id="HostDB:ENSMUSG00000031568"/>
<dbReference type="eggNOG" id="KOG4018">
    <property type="taxonomic scope" value="Eukaryota"/>
</dbReference>
<dbReference type="GeneTree" id="ENSGT00390000015545"/>
<dbReference type="HOGENOM" id="CLU_123949_0_0_1"/>
<dbReference type="InParanoid" id="Q9CPR1"/>
<dbReference type="OMA" id="CGMTYTL"/>
<dbReference type="OrthoDB" id="10045773at2759"/>
<dbReference type="PhylomeDB" id="Q9CPR1"/>
<dbReference type="TreeFam" id="TF326409"/>
<dbReference type="BioGRID-ORCS" id="192174">
    <property type="hits" value="5 hits in 76 CRISPR screens"/>
</dbReference>
<dbReference type="ChiTaRS" id="Rwdd4a">
    <property type="organism name" value="mouse"/>
</dbReference>
<dbReference type="PRO" id="PR:Q9CPR1"/>
<dbReference type="Proteomes" id="UP000000589">
    <property type="component" value="Chromosome 8"/>
</dbReference>
<dbReference type="RNAct" id="Q9CPR1">
    <property type="molecule type" value="protein"/>
</dbReference>
<dbReference type="Bgee" id="ENSMUSG00000031568">
    <property type="expression patterns" value="Expressed in condyle and 256 other cell types or tissues"/>
</dbReference>
<dbReference type="ExpressionAtlas" id="Q9CPR1">
    <property type="expression patterns" value="baseline and differential"/>
</dbReference>
<dbReference type="CDD" id="cd23817">
    <property type="entry name" value="RWD-RWDD4"/>
    <property type="match status" value="1"/>
</dbReference>
<dbReference type="Gene3D" id="3.10.110.10">
    <property type="entry name" value="Ubiquitin Conjugating Enzyme"/>
    <property type="match status" value="1"/>
</dbReference>
<dbReference type="InterPro" id="IPR006575">
    <property type="entry name" value="RWD_dom"/>
</dbReference>
<dbReference type="InterPro" id="IPR042770">
    <property type="entry name" value="RWDD4"/>
</dbReference>
<dbReference type="InterPro" id="IPR016135">
    <property type="entry name" value="UBQ-conjugating_enzyme/RWD"/>
</dbReference>
<dbReference type="PANTHER" id="PTHR21275">
    <property type="entry name" value="RWD DOMAIN-CONTAINING PROTEIN 4"/>
    <property type="match status" value="1"/>
</dbReference>
<dbReference type="PANTHER" id="PTHR21275:SF1">
    <property type="entry name" value="RWD DOMAIN-CONTAINING PROTEIN 4"/>
    <property type="match status" value="1"/>
</dbReference>
<dbReference type="Pfam" id="PF05773">
    <property type="entry name" value="RWD"/>
    <property type="match status" value="1"/>
</dbReference>
<dbReference type="SMART" id="SM00591">
    <property type="entry name" value="RWD"/>
    <property type="match status" value="1"/>
</dbReference>
<dbReference type="SUPFAM" id="SSF54495">
    <property type="entry name" value="UBC-like"/>
    <property type="match status" value="1"/>
</dbReference>
<dbReference type="PROSITE" id="PS50908">
    <property type="entry name" value="RWD"/>
    <property type="match status" value="1"/>
</dbReference>
<evidence type="ECO:0000255" key="1">
    <source>
        <dbReference type="PROSITE-ProRule" id="PRU00179"/>
    </source>
</evidence>
<evidence type="ECO:0000256" key="2">
    <source>
        <dbReference type="SAM" id="MobiDB-lite"/>
    </source>
</evidence>
<feature type="chain" id="PRO_0000076308" description="RWD domain-containing protein 4">
    <location>
        <begin position="1"/>
        <end position="188"/>
    </location>
</feature>
<feature type="domain" description="RWD" evidence="1">
    <location>
        <begin position="9"/>
        <end position="111"/>
    </location>
</feature>
<feature type="region of interest" description="Disordered" evidence="2">
    <location>
        <begin position="132"/>
        <end position="167"/>
    </location>
</feature>
<feature type="compositionally biased region" description="Basic and acidic residues" evidence="2">
    <location>
        <begin position="155"/>
        <end position="166"/>
    </location>
</feature>
<organism>
    <name type="scientific">Mus musculus</name>
    <name type="common">Mouse</name>
    <dbReference type="NCBI Taxonomy" id="10090"/>
    <lineage>
        <taxon>Eukaryota</taxon>
        <taxon>Metazoa</taxon>
        <taxon>Chordata</taxon>
        <taxon>Craniata</taxon>
        <taxon>Vertebrata</taxon>
        <taxon>Euteleostomi</taxon>
        <taxon>Mammalia</taxon>
        <taxon>Eutheria</taxon>
        <taxon>Euarchontoglires</taxon>
        <taxon>Glires</taxon>
        <taxon>Rodentia</taxon>
        <taxon>Myomorpha</taxon>
        <taxon>Muroidea</taxon>
        <taxon>Muridae</taxon>
        <taxon>Murinae</taxon>
        <taxon>Mus</taxon>
        <taxon>Mus</taxon>
    </lineage>
</organism>
<accession>Q9CPR1</accession>
<reference key="1">
    <citation type="journal article" date="2005" name="Science">
        <title>The transcriptional landscape of the mammalian genome.</title>
        <authorList>
            <person name="Carninci P."/>
            <person name="Kasukawa T."/>
            <person name="Katayama S."/>
            <person name="Gough J."/>
            <person name="Frith M.C."/>
            <person name="Maeda N."/>
            <person name="Oyama R."/>
            <person name="Ravasi T."/>
            <person name="Lenhard B."/>
            <person name="Wells C."/>
            <person name="Kodzius R."/>
            <person name="Shimokawa K."/>
            <person name="Bajic V.B."/>
            <person name="Brenner S.E."/>
            <person name="Batalov S."/>
            <person name="Forrest A.R."/>
            <person name="Zavolan M."/>
            <person name="Davis M.J."/>
            <person name="Wilming L.G."/>
            <person name="Aidinis V."/>
            <person name="Allen J.E."/>
            <person name="Ambesi-Impiombato A."/>
            <person name="Apweiler R."/>
            <person name="Aturaliya R.N."/>
            <person name="Bailey T.L."/>
            <person name="Bansal M."/>
            <person name="Baxter L."/>
            <person name="Beisel K.W."/>
            <person name="Bersano T."/>
            <person name="Bono H."/>
            <person name="Chalk A.M."/>
            <person name="Chiu K.P."/>
            <person name="Choudhary V."/>
            <person name="Christoffels A."/>
            <person name="Clutterbuck D.R."/>
            <person name="Crowe M.L."/>
            <person name="Dalla E."/>
            <person name="Dalrymple B.P."/>
            <person name="de Bono B."/>
            <person name="Della Gatta G."/>
            <person name="di Bernardo D."/>
            <person name="Down T."/>
            <person name="Engstrom P."/>
            <person name="Fagiolini M."/>
            <person name="Faulkner G."/>
            <person name="Fletcher C.F."/>
            <person name="Fukushima T."/>
            <person name="Furuno M."/>
            <person name="Futaki S."/>
            <person name="Gariboldi M."/>
            <person name="Georgii-Hemming P."/>
            <person name="Gingeras T.R."/>
            <person name="Gojobori T."/>
            <person name="Green R.E."/>
            <person name="Gustincich S."/>
            <person name="Harbers M."/>
            <person name="Hayashi Y."/>
            <person name="Hensch T.K."/>
            <person name="Hirokawa N."/>
            <person name="Hill D."/>
            <person name="Huminiecki L."/>
            <person name="Iacono M."/>
            <person name="Ikeo K."/>
            <person name="Iwama A."/>
            <person name="Ishikawa T."/>
            <person name="Jakt M."/>
            <person name="Kanapin A."/>
            <person name="Katoh M."/>
            <person name="Kawasawa Y."/>
            <person name="Kelso J."/>
            <person name="Kitamura H."/>
            <person name="Kitano H."/>
            <person name="Kollias G."/>
            <person name="Krishnan S.P."/>
            <person name="Kruger A."/>
            <person name="Kummerfeld S.K."/>
            <person name="Kurochkin I.V."/>
            <person name="Lareau L.F."/>
            <person name="Lazarevic D."/>
            <person name="Lipovich L."/>
            <person name="Liu J."/>
            <person name="Liuni S."/>
            <person name="McWilliam S."/>
            <person name="Madan Babu M."/>
            <person name="Madera M."/>
            <person name="Marchionni L."/>
            <person name="Matsuda H."/>
            <person name="Matsuzawa S."/>
            <person name="Miki H."/>
            <person name="Mignone F."/>
            <person name="Miyake S."/>
            <person name="Morris K."/>
            <person name="Mottagui-Tabar S."/>
            <person name="Mulder N."/>
            <person name="Nakano N."/>
            <person name="Nakauchi H."/>
            <person name="Ng P."/>
            <person name="Nilsson R."/>
            <person name="Nishiguchi S."/>
            <person name="Nishikawa S."/>
            <person name="Nori F."/>
            <person name="Ohara O."/>
            <person name="Okazaki Y."/>
            <person name="Orlando V."/>
            <person name="Pang K.C."/>
            <person name="Pavan W.J."/>
            <person name="Pavesi G."/>
            <person name="Pesole G."/>
            <person name="Petrovsky N."/>
            <person name="Piazza S."/>
            <person name="Reed J."/>
            <person name="Reid J.F."/>
            <person name="Ring B.Z."/>
            <person name="Ringwald M."/>
            <person name="Rost B."/>
            <person name="Ruan Y."/>
            <person name="Salzberg S.L."/>
            <person name="Sandelin A."/>
            <person name="Schneider C."/>
            <person name="Schoenbach C."/>
            <person name="Sekiguchi K."/>
            <person name="Semple C.A."/>
            <person name="Seno S."/>
            <person name="Sessa L."/>
            <person name="Sheng Y."/>
            <person name="Shibata Y."/>
            <person name="Shimada H."/>
            <person name="Shimada K."/>
            <person name="Silva D."/>
            <person name="Sinclair B."/>
            <person name="Sperling S."/>
            <person name="Stupka E."/>
            <person name="Sugiura K."/>
            <person name="Sultana R."/>
            <person name="Takenaka Y."/>
            <person name="Taki K."/>
            <person name="Tammoja K."/>
            <person name="Tan S.L."/>
            <person name="Tang S."/>
            <person name="Taylor M.S."/>
            <person name="Tegner J."/>
            <person name="Teichmann S.A."/>
            <person name="Ueda H.R."/>
            <person name="van Nimwegen E."/>
            <person name="Verardo R."/>
            <person name="Wei C.L."/>
            <person name="Yagi K."/>
            <person name="Yamanishi H."/>
            <person name="Zabarovsky E."/>
            <person name="Zhu S."/>
            <person name="Zimmer A."/>
            <person name="Hide W."/>
            <person name="Bult C."/>
            <person name="Grimmond S.M."/>
            <person name="Teasdale R.D."/>
            <person name="Liu E.T."/>
            <person name="Brusic V."/>
            <person name="Quackenbush J."/>
            <person name="Wahlestedt C."/>
            <person name="Mattick J.S."/>
            <person name="Hume D.A."/>
            <person name="Kai C."/>
            <person name="Sasaki D."/>
            <person name="Tomaru Y."/>
            <person name="Fukuda S."/>
            <person name="Kanamori-Katayama M."/>
            <person name="Suzuki M."/>
            <person name="Aoki J."/>
            <person name="Arakawa T."/>
            <person name="Iida J."/>
            <person name="Imamura K."/>
            <person name="Itoh M."/>
            <person name="Kato T."/>
            <person name="Kawaji H."/>
            <person name="Kawagashira N."/>
            <person name="Kawashima T."/>
            <person name="Kojima M."/>
            <person name="Kondo S."/>
            <person name="Konno H."/>
            <person name="Nakano K."/>
            <person name="Ninomiya N."/>
            <person name="Nishio T."/>
            <person name="Okada M."/>
            <person name="Plessy C."/>
            <person name="Shibata K."/>
            <person name="Shiraki T."/>
            <person name="Suzuki S."/>
            <person name="Tagami M."/>
            <person name="Waki K."/>
            <person name="Watahiki A."/>
            <person name="Okamura-Oho Y."/>
            <person name="Suzuki H."/>
            <person name="Kawai J."/>
            <person name="Hayashizaki Y."/>
        </authorList>
    </citation>
    <scope>NUCLEOTIDE SEQUENCE [LARGE SCALE MRNA]</scope>
    <source>
        <strain>C57BL/6J</strain>
        <tissue>Lung</tissue>
        <tissue>Testis</tissue>
    </source>
</reference>
<reference key="2">
    <citation type="journal article" date="2004" name="Genome Res.">
        <title>The status, quality, and expansion of the NIH full-length cDNA project: the Mammalian Gene Collection (MGC).</title>
        <authorList>
            <consortium name="The MGC Project Team"/>
        </authorList>
    </citation>
    <scope>NUCLEOTIDE SEQUENCE [LARGE SCALE MRNA]</scope>
    <source>
        <tissue>Eye</tissue>
    </source>
</reference>
<protein>
    <recommendedName>
        <fullName>RWD domain-containing protein 4</fullName>
    </recommendedName>
</protein>
<sequence length="188" mass="21138">MGANEDQEMELEALRSIYEGDNSFRELSPVSFQYRIGEDGDPKAFLIEVSWTETYPQTAPVISMNAFFNNTISSAVKQSILAKLQEAVEVNLGTAMTYTLFEYAKDHKEQFMENHHPGNSATPVANIISVETPTTAPSSKKKEKKEQLSKAQKRKLADKTDHKGELPRGWNWVDVVKHLSKTGSKDDE</sequence>
<name>RWDD4_MOUSE</name>
<keyword id="KW-1185">Reference proteome</keyword>
<gene>
    <name type="primary">Rwdd4</name>
    <name type="synonym">Rwdd4a</name>
</gene>
<proteinExistence type="evidence at transcript level"/>